<organism>
    <name type="scientific">Bordetella pertussis (strain Tohama I / ATCC BAA-589 / NCTC 13251)</name>
    <dbReference type="NCBI Taxonomy" id="257313"/>
    <lineage>
        <taxon>Bacteria</taxon>
        <taxon>Pseudomonadati</taxon>
        <taxon>Pseudomonadota</taxon>
        <taxon>Betaproteobacteria</taxon>
        <taxon>Burkholderiales</taxon>
        <taxon>Alcaligenaceae</taxon>
        <taxon>Bordetella</taxon>
    </lineage>
</organism>
<evidence type="ECO:0000255" key="1">
    <source>
        <dbReference type="HAMAP-Rule" id="MF_00402"/>
    </source>
</evidence>
<evidence type="ECO:0000305" key="2"/>
<name>RL19_BORPE</name>
<dbReference type="EMBL" id="BX640413">
    <property type="protein sequence ID" value="CAE41277.1"/>
    <property type="molecule type" value="Genomic_DNA"/>
</dbReference>
<dbReference type="RefSeq" id="NP_879772.1">
    <property type="nucleotide sequence ID" value="NC_002929.2"/>
</dbReference>
<dbReference type="RefSeq" id="WP_003813315.1">
    <property type="nucleotide sequence ID" value="NZ_CP039022.1"/>
</dbReference>
<dbReference type="SMR" id="Q7VZE0"/>
<dbReference type="STRING" id="257313.BP0975"/>
<dbReference type="PaxDb" id="257313-BP0975"/>
<dbReference type="GeneID" id="93203424"/>
<dbReference type="KEGG" id="bpe:BP0975"/>
<dbReference type="PATRIC" id="fig|257313.5.peg.1040"/>
<dbReference type="eggNOG" id="COG0335">
    <property type="taxonomic scope" value="Bacteria"/>
</dbReference>
<dbReference type="HOGENOM" id="CLU_103507_1_0_4"/>
<dbReference type="Proteomes" id="UP000002676">
    <property type="component" value="Chromosome"/>
</dbReference>
<dbReference type="GO" id="GO:0022625">
    <property type="term" value="C:cytosolic large ribosomal subunit"/>
    <property type="evidence" value="ECO:0007669"/>
    <property type="project" value="TreeGrafter"/>
</dbReference>
<dbReference type="GO" id="GO:0003735">
    <property type="term" value="F:structural constituent of ribosome"/>
    <property type="evidence" value="ECO:0007669"/>
    <property type="project" value="InterPro"/>
</dbReference>
<dbReference type="GO" id="GO:0006412">
    <property type="term" value="P:translation"/>
    <property type="evidence" value="ECO:0007669"/>
    <property type="project" value="UniProtKB-UniRule"/>
</dbReference>
<dbReference type="FunFam" id="2.30.30.790:FF:000001">
    <property type="entry name" value="50S ribosomal protein L19"/>
    <property type="match status" value="1"/>
</dbReference>
<dbReference type="Gene3D" id="2.30.30.790">
    <property type="match status" value="1"/>
</dbReference>
<dbReference type="HAMAP" id="MF_00402">
    <property type="entry name" value="Ribosomal_bL19"/>
    <property type="match status" value="1"/>
</dbReference>
<dbReference type="InterPro" id="IPR001857">
    <property type="entry name" value="Ribosomal_bL19"/>
</dbReference>
<dbReference type="InterPro" id="IPR018257">
    <property type="entry name" value="Ribosomal_bL19_CS"/>
</dbReference>
<dbReference type="InterPro" id="IPR038657">
    <property type="entry name" value="Ribosomal_bL19_sf"/>
</dbReference>
<dbReference type="InterPro" id="IPR008991">
    <property type="entry name" value="Translation_prot_SH3-like_sf"/>
</dbReference>
<dbReference type="NCBIfam" id="TIGR01024">
    <property type="entry name" value="rplS_bact"/>
    <property type="match status" value="1"/>
</dbReference>
<dbReference type="PANTHER" id="PTHR15680:SF9">
    <property type="entry name" value="LARGE RIBOSOMAL SUBUNIT PROTEIN BL19M"/>
    <property type="match status" value="1"/>
</dbReference>
<dbReference type="PANTHER" id="PTHR15680">
    <property type="entry name" value="RIBOSOMAL PROTEIN L19"/>
    <property type="match status" value="1"/>
</dbReference>
<dbReference type="Pfam" id="PF01245">
    <property type="entry name" value="Ribosomal_L19"/>
    <property type="match status" value="1"/>
</dbReference>
<dbReference type="PIRSF" id="PIRSF002191">
    <property type="entry name" value="Ribosomal_L19"/>
    <property type="match status" value="1"/>
</dbReference>
<dbReference type="PRINTS" id="PR00061">
    <property type="entry name" value="RIBOSOMALL19"/>
</dbReference>
<dbReference type="SUPFAM" id="SSF50104">
    <property type="entry name" value="Translation proteins SH3-like domain"/>
    <property type="match status" value="1"/>
</dbReference>
<dbReference type="PROSITE" id="PS01015">
    <property type="entry name" value="RIBOSOMAL_L19"/>
    <property type="match status" value="1"/>
</dbReference>
<protein>
    <recommendedName>
        <fullName evidence="1">Large ribosomal subunit protein bL19</fullName>
    </recommendedName>
    <alternativeName>
        <fullName evidence="2">50S ribosomal protein L19</fullName>
    </alternativeName>
</protein>
<accession>Q7VZE0</accession>
<gene>
    <name evidence="1" type="primary">rplS</name>
    <name type="ordered locus">BP0975</name>
</gene>
<comment type="function">
    <text evidence="1">This protein is located at the 30S-50S ribosomal subunit interface and may play a role in the structure and function of the aminoacyl-tRNA binding site.</text>
</comment>
<comment type="similarity">
    <text evidence="1">Belongs to the bacterial ribosomal protein bL19 family.</text>
</comment>
<sequence>MNLIAILEQEEIARLTGGNAVTEFAPGDTVVVSVNVVEGTRKRVQAFEGVVIAKRNRGLNSSFIVRKISSGEAVERTFQLYSPQIAGIEVKRRGDVRRAKLYYLRSRSGKSARIKEKLVLKKAKSA</sequence>
<reference key="1">
    <citation type="journal article" date="2003" name="Nat. Genet.">
        <title>Comparative analysis of the genome sequences of Bordetella pertussis, Bordetella parapertussis and Bordetella bronchiseptica.</title>
        <authorList>
            <person name="Parkhill J."/>
            <person name="Sebaihia M."/>
            <person name="Preston A."/>
            <person name="Murphy L.D."/>
            <person name="Thomson N.R."/>
            <person name="Harris D.E."/>
            <person name="Holden M.T.G."/>
            <person name="Churcher C.M."/>
            <person name="Bentley S.D."/>
            <person name="Mungall K.L."/>
            <person name="Cerdeno-Tarraga A.-M."/>
            <person name="Temple L."/>
            <person name="James K.D."/>
            <person name="Harris B."/>
            <person name="Quail M.A."/>
            <person name="Achtman M."/>
            <person name="Atkin R."/>
            <person name="Baker S."/>
            <person name="Basham D."/>
            <person name="Bason N."/>
            <person name="Cherevach I."/>
            <person name="Chillingworth T."/>
            <person name="Collins M."/>
            <person name="Cronin A."/>
            <person name="Davis P."/>
            <person name="Doggett J."/>
            <person name="Feltwell T."/>
            <person name="Goble A."/>
            <person name="Hamlin N."/>
            <person name="Hauser H."/>
            <person name="Holroyd S."/>
            <person name="Jagels K."/>
            <person name="Leather S."/>
            <person name="Moule S."/>
            <person name="Norberczak H."/>
            <person name="O'Neil S."/>
            <person name="Ormond D."/>
            <person name="Price C."/>
            <person name="Rabbinowitsch E."/>
            <person name="Rutter S."/>
            <person name="Sanders M."/>
            <person name="Saunders D."/>
            <person name="Seeger K."/>
            <person name="Sharp S."/>
            <person name="Simmonds M."/>
            <person name="Skelton J."/>
            <person name="Squares R."/>
            <person name="Squares S."/>
            <person name="Stevens K."/>
            <person name="Unwin L."/>
            <person name="Whitehead S."/>
            <person name="Barrell B.G."/>
            <person name="Maskell D.J."/>
        </authorList>
    </citation>
    <scope>NUCLEOTIDE SEQUENCE [LARGE SCALE GENOMIC DNA]</scope>
    <source>
        <strain>Tohama I / ATCC BAA-589 / NCTC 13251</strain>
    </source>
</reference>
<keyword id="KW-1185">Reference proteome</keyword>
<keyword id="KW-0687">Ribonucleoprotein</keyword>
<keyword id="KW-0689">Ribosomal protein</keyword>
<feature type="chain" id="PRO_0000163422" description="Large ribosomal subunit protein bL19">
    <location>
        <begin position="1"/>
        <end position="126"/>
    </location>
</feature>
<proteinExistence type="inferred from homology"/>